<organism>
    <name type="scientific">Buchnera aphidicola subsp. Schizaphis graminum (strain Sg)</name>
    <dbReference type="NCBI Taxonomy" id="198804"/>
    <lineage>
        <taxon>Bacteria</taxon>
        <taxon>Pseudomonadati</taxon>
        <taxon>Pseudomonadota</taxon>
        <taxon>Gammaproteobacteria</taxon>
        <taxon>Enterobacterales</taxon>
        <taxon>Erwiniaceae</taxon>
        <taxon>Buchnera</taxon>
    </lineage>
</organism>
<evidence type="ECO:0000250" key="1"/>
<evidence type="ECO:0000255" key="2"/>
<evidence type="ECO:0000305" key="3"/>
<sequence>MNKIVICILSFFLLIFSSSFFIVKEGERGIILQFGKVLRNNKQKTLVYTPGLHFKIPFFENVKILDSRIHTMDNQADRFVTKEKKDLIVDSYIKWRISDFSRYYLATGGGDFFQAEVLLKRKFSDRLRSEIGRLNVKEIVTDSRGRLTTDVLYSLNKGTINLDSTSLINVNSMNALGIEVVDVRIKQINLPLEVSDAIYNRMRAERESVARSQRSQGQEKAEKLRATADYRVSLILAEAQKKALMIKGQGEAEVAKLFLENFGQESSFYFFIRSLHAYENSFKNSNNIMLINSDNEFFKYMNTEIKN</sequence>
<comment type="function">
    <text evidence="1">HflC and HflK could regulate a protease.</text>
</comment>
<comment type="subunit">
    <text evidence="1">HflC and HflK may interact to form a multimeric complex.</text>
</comment>
<comment type="subcellular location">
    <subcellularLocation>
        <location evidence="3">Membrane</location>
        <topology evidence="3">Single-pass membrane protein</topology>
    </subcellularLocation>
</comment>
<comment type="similarity">
    <text evidence="3">Belongs to the band 7/mec-2 family. HflC subfamily.</text>
</comment>
<feature type="chain" id="PRO_0000094071" description="Protein HflC">
    <location>
        <begin position="1"/>
        <end position="307"/>
    </location>
</feature>
<feature type="transmembrane region" description="Helical" evidence="2">
    <location>
        <begin position="3"/>
        <end position="23"/>
    </location>
</feature>
<proteinExistence type="inferred from homology"/>
<reference key="1">
    <citation type="journal article" date="2002" name="Science">
        <title>50 million years of genomic stasis in endosymbiotic bacteria.</title>
        <authorList>
            <person name="Tamas I."/>
            <person name="Klasson L."/>
            <person name="Canbaeck B."/>
            <person name="Naeslund A.K."/>
            <person name="Eriksson A.-S."/>
            <person name="Wernegreen J.J."/>
            <person name="Sandstroem J.P."/>
            <person name="Moran N.A."/>
            <person name="Andersson S.G.E."/>
        </authorList>
    </citation>
    <scope>NUCLEOTIDE SEQUENCE [LARGE SCALE GENOMIC DNA]</scope>
    <source>
        <strain>Sg</strain>
    </source>
</reference>
<name>HFLC_BUCAP</name>
<keyword id="KW-0472">Membrane</keyword>
<keyword id="KW-0812">Transmembrane</keyword>
<keyword id="KW-1133">Transmembrane helix</keyword>
<accession>Q8K915</accession>
<dbReference type="EMBL" id="AE013218">
    <property type="protein sequence ID" value="AAM68086.1"/>
    <property type="molecule type" value="Genomic_DNA"/>
</dbReference>
<dbReference type="RefSeq" id="WP_011054052.1">
    <property type="nucleotide sequence ID" value="NC_004061.1"/>
</dbReference>
<dbReference type="SMR" id="Q8K915"/>
<dbReference type="STRING" id="198804.BUsg_547"/>
<dbReference type="MEROPS" id="I87.001"/>
<dbReference type="GeneID" id="93004024"/>
<dbReference type="KEGG" id="bas:BUsg_547"/>
<dbReference type="eggNOG" id="COG0330">
    <property type="taxonomic scope" value="Bacteria"/>
</dbReference>
<dbReference type="HOGENOM" id="CLU_059167_3_0_6"/>
<dbReference type="Proteomes" id="UP000000416">
    <property type="component" value="Chromosome"/>
</dbReference>
<dbReference type="GO" id="GO:0016020">
    <property type="term" value="C:membrane"/>
    <property type="evidence" value="ECO:0007669"/>
    <property type="project" value="UniProtKB-SubCell"/>
</dbReference>
<dbReference type="CDD" id="cd03405">
    <property type="entry name" value="SPFH_HflC"/>
    <property type="match status" value="1"/>
</dbReference>
<dbReference type="FunFam" id="3.30.479.30:FF:000005">
    <property type="entry name" value="Protease modulator HflC"/>
    <property type="match status" value="1"/>
</dbReference>
<dbReference type="Gene3D" id="3.30.479.30">
    <property type="entry name" value="Band 7 domain"/>
    <property type="match status" value="1"/>
</dbReference>
<dbReference type="InterPro" id="IPR001107">
    <property type="entry name" value="Band_7"/>
</dbReference>
<dbReference type="InterPro" id="IPR036013">
    <property type="entry name" value="Band_7/SPFH_dom_sf"/>
</dbReference>
<dbReference type="InterPro" id="IPR010200">
    <property type="entry name" value="HflC"/>
</dbReference>
<dbReference type="NCBIfam" id="TIGR01932">
    <property type="entry name" value="hflC"/>
    <property type="match status" value="1"/>
</dbReference>
<dbReference type="PANTHER" id="PTHR42911">
    <property type="entry name" value="MODULATOR OF FTSH PROTEASE HFLC"/>
    <property type="match status" value="1"/>
</dbReference>
<dbReference type="PANTHER" id="PTHR42911:SF1">
    <property type="entry name" value="MODULATOR OF FTSH PROTEASE HFLC"/>
    <property type="match status" value="1"/>
</dbReference>
<dbReference type="Pfam" id="PF01145">
    <property type="entry name" value="Band_7"/>
    <property type="match status" value="1"/>
</dbReference>
<dbReference type="PIRSF" id="PIRSF005651">
    <property type="entry name" value="HflC"/>
    <property type="match status" value="1"/>
</dbReference>
<dbReference type="SMART" id="SM00244">
    <property type="entry name" value="PHB"/>
    <property type="match status" value="1"/>
</dbReference>
<dbReference type="SUPFAM" id="SSF117892">
    <property type="entry name" value="Band 7/SPFH domain"/>
    <property type="match status" value="1"/>
</dbReference>
<protein>
    <recommendedName>
        <fullName>Protein HflC</fullName>
    </recommendedName>
</protein>
<gene>
    <name type="primary">hflC</name>
    <name type="ordered locus">BUsg_547</name>
</gene>